<feature type="signal peptide">
    <location>
        <begin position="1"/>
        <end position="24"/>
    </location>
</feature>
<feature type="chain" id="PRO_0000018687" description="Multidrug efflux pump subunit AcrA">
    <location>
        <begin position="25"/>
        <end position="397"/>
    </location>
</feature>
<feature type="region of interest" description="Interaction with AcrB">
    <location>
        <begin position="172"/>
        <end position="397"/>
    </location>
</feature>
<feature type="region of interest" description="Required for growth on efflux drugs">
    <location>
        <begin position="313"/>
        <end position="397"/>
    </location>
</feature>
<feature type="region of interest" description="Disordered" evidence="2">
    <location>
        <begin position="377"/>
        <end position="397"/>
    </location>
</feature>
<feature type="coiled-coil region">
    <location>
        <begin position="98"/>
        <end position="172"/>
    </location>
</feature>
<feature type="compositionally biased region" description="Polar residues" evidence="2">
    <location>
        <begin position="379"/>
        <end position="397"/>
    </location>
</feature>
<feature type="lipid moiety-binding region" description="N-palmitoyl cysteine" evidence="10">
    <location>
        <position position="25"/>
    </location>
</feature>
<feature type="lipid moiety-binding region" description="S-diacylglycerol cysteine" evidence="9">
    <location>
        <position position="25"/>
    </location>
</feature>
<feature type="mutagenesis site" description="Fully functional (replaces endogenous signal and lipid anchor with periplasmic signal for OmpA).">
    <original>MNKNRGFTPLAVVLMLSGSLALTGC</original>
    <variation>MKKTAIAIAVALAGFATVAQA</variation>
    <location>
        <begin position="1"/>
        <end position="25"/>
    </location>
</feature>
<feature type="mutagenesis site" description="Wild-type resistance to efflux substrates. Protein unstable; when associated with 287-M-M-288." evidence="6">
    <original>FL</original>
    <variation>MM</variation>
    <location>
        <begin position="223"/>
        <end position="224"/>
    </location>
</feature>
<feature type="mutagenesis site" description="Wild-type resistance to efflux substrates. Protein unstable; when associated with 223-M-M-224." evidence="6">
    <original>LL</original>
    <variation>MM</variation>
    <location>
        <begin position="287"/>
        <end position="288"/>
    </location>
</feature>
<feature type="strand" evidence="11">
    <location>
        <begin position="55"/>
        <end position="61"/>
    </location>
</feature>
<feature type="strand" evidence="11">
    <location>
        <begin position="63"/>
        <end position="68"/>
    </location>
</feature>
<feature type="strand" evidence="11">
    <location>
        <begin position="74"/>
        <end position="79"/>
    </location>
</feature>
<feature type="strand" evidence="11">
    <location>
        <begin position="93"/>
        <end position="96"/>
    </location>
</feature>
<feature type="helix" evidence="11">
    <location>
        <begin position="99"/>
        <end position="130"/>
    </location>
</feature>
<feature type="turn" evidence="11">
    <location>
        <begin position="131"/>
        <end position="134"/>
    </location>
</feature>
<feature type="helix" evidence="11">
    <location>
        <begin position="140"/>
        <end position="172"/>
    </location>
</feature>
<feature type="strand" evidence="11">
    <location>
        <begin position="182"/>
        <end position="184"/>
    </location>
</feature>
<feature type="strand" evidence="11">
    <location>
        <begin position="203"/>
        <end position="208"/>
    </location>
</feature>
<feature type="strand" evidence="11">
    <location>
        <begin position="210"/>
        <end position="219"/>
    </location>
</feature>
<feature type="turn" evidence="11">
    <location>
        <begin position="220"/>
        <end position="222"/>
    </location>
</feature>
<feature type="helix" evidence="11">
    <location>
        <begin position="224"/>
        <end position="230"/>
    </location>
</feature>
<feature type="strand" evidence="11">
    <location>
        <begin position="244"/>
        <end position="247"/>
    </location>
</feature>
<feature type="strand" evidence="11">
    <location>
        <begin position="249"/>
        <end position="251"/>
    </location>
</feature>
<feature type="strand" evidence="11">
    <location>
        <begin position="258"/>
        <end position="263"/>
    </location>
</feature>
<feature type="strand" evidence="11">
    <location>
        <begin position="269"/>
        <end position="271"/>
    </location>
</feature>
<feature type="strand" evidence="11">
    <location>
        <begin position="273"/>
        <end position="280"/>
    </location>
</feature>
<feature type="strand" evidence="11">
    <location>
        <begin position="292"/>
        <end position="297"/>
    </location>
</feature>
<sequence>MNKNRGFTPLAVVLMLSGSLALTGCDDKQAQQGGQQMPAVGVVTVKTEPLQITTELPGRTSAYRIAEVRPQVSGIILKRNFKEGSDIEAGVSLYQIDPATYQATYDSAKGDLAKAQAAANIAQLTVNRYQKLLGTQYISKQEYDQALADAQQANAAVTAAKAAVETARINLAYTKVTSPISGRIGKSNVTEGALVQNGQATALATVQQLDPIYVDVTQSSNDFLRLKQELANGTLKQENGKAKVSLITSDGIKFPQDGTLEFSDVTVDQTTGSITLRAIFPNPDHTLLPGMFVRARLEEGLNPNAILVPQQGVTRTPRGDATVLVVGADDKVETRPIVASQAIGDKWLVTEGLKAGDRVVISGLQKVRPGVQVKAQEVTADNNQQAASGAQPEQSKS</sequence>
<name>ACRA_ECOLI</name>
<organism>
    <name type="scientific">Escherichia coli (strain K12)</name>
    <dbReference type="NCBI Taxonomy" id="83333"/>
    <lineage>
        <taxon>Bacteria</taxon>
        <taxon>Pseudomonadati</taxon>
        <taxon>Pseudomonadota</taxon>
        <taxon>Gammaproteobacteria</taxon>
        <taxon>Enterobacterales</taxon>
        <taxon>Enterobacteriaceae</taxon>
        <taxon>Escherichia</taxon>
    </lineage>
</organism>
<dbReference type="EMBL" id="U00734">
    <property type="protein sequence ID" value="AAA67134.1"/>
    <property type="molecule type" value="Genomic_DNA"/>
</dbReference>
<dbReference type="EMBL" id="M94248">
    <property type="protein sequence ID" value="AAA23410.1"/>
    <property type="molecule type" value="Genomic_DNA"/>
</dbReference>
<dbReference type="EMBL" id="U82664">
    <property type="protein sequence ID" value="AAB40217.1"/>
    <property type="molecule type" value="Genomic_DNA"/>
</dbReference>
<dbReference type="EMBL" id="U00096">
    <property type="protein sequence ID" value="AAC73565.1"/>
    <property type="molecule type" value="Genomic_DNA"/>
</dbReference>
<dbReference type="EMBL" id="AP009048">
    <property type="protein sequence ID" value="BAE76242.1"/>
    <property type="molecule type" value="Genomic_DNA"/>
</dbReference>
<dbReference type="PIR" id="A36938">
    <property type="entry name" value="A36938"/>
</dbReference>
<dbReference type="RefSeq" id="NP_414996.1">
    <property type="nucleotide sequence ID" value="NC_000913.3"/>
</dbReference>
<dbReference type="RefSeq" id="WP_001295324.1">
    <property type="nucleotide sequence ID" value="NZ_STEB01000007.1"/>
</dbReference>
<dbReference type="PDB" id="2F1M">
    <property type="method" value="X-ray"/>
    <property type="resolution" value="2.71 A"/>
    <property type="chains" value="A/B/C/D=45-312"/>
</dbReference>
<dbReference type="PDB" id="5NG5">
    <property type="method" value="EM"/>
    <property type="resolution" value="6.50 A"/>
    <property type="chains" value="A/B/D/E/G/H=25-397"/>
</dbReference>
<dbReference type="PDB" id="5O66">
    <property type="method" value="EM"/>
    <property type="resolution" value="5.90 A"/>
    <property type="chains" value="D/E/F/G/H/I=25-397"/>
</dbReference>
<dbReference type="PDB" id="5V5S">
    <property type="method" value="EM"/>
    <property type="resolution" value="6.50 A"/>
    <property type="chains" value="D/E/F/G/H/I=1-397"/>
</dbReference>
<dbReference type="PDBsum" id="2F1M"/>
<dbReference type="PDBsum" id="5NG5"/>
<dbReference type="PDBsum" id="5O66"/>
<dbReference type="PDBsum" id="5V5S"/>
<dbReference type="EMDB" id="EMD-3636"/>
<dbReference type="EMDB" id="EMD-8640"/>
<dbReference type="SMR" id="P0AE06"/>
<dbReference type="BioGRID" id="4259860">
    <property type="interactions" value="404"/>
</dbReference>
<dbReference type="BioGRID" id="849501">
    <property type="interactions" value="3"/>
</dbReference>
<dbReference type="ComplexPortal" id="CPX-4263">
    <property type="entry name" value="AcrAB-TolC multidrug efflux transport complex"/>
</dbReference>
<dbReference type="ComplexPortal" id="CPX-4264">
    <property type="entry name" value="AcrAD-TolC multidrug efflux transport complex"/>
</dbReference>
<dbReference type="DIP" id="DIP-29039N"/>
<dbReference type="FunCoup" id="P0AE06">
    <property type="interactions" value="225"/>
</dbReference>
<dbReference type="IntAct" id="P0AE06">
    <property type="interactions" value="5"/>
</dbReference>
<dbReference type="STRING" id="511145.b0463"/>
<dbReference type="CARD" id="ARO:3004043">
    <property type="molecule name" value="Ecol_acrA"/>
    <property type="mechanism identifier" value="ARO:0010000"/>
    <property type="mechanism name" value="antibiotic efflux"/>
</dbReference>
<dbReference type="TCDB" id="8.A.1.6.1">
    <property type="family name" value="the membrane fusion protein (mfp) family"/>
</dbReference>
<dbReference type="jPOST" id="P0AE06"/>
<dbReference type="PaxDb" id="511145-b0463"/>
<dbReference type="EnsemblBacteria" id="AAC73565">
    <property type="protein sequence ID" value="AAC73565"/>
    <property type="gene ID" value="b0463"/>
</dbReference>
<dbReference type="GeneID" id="75202888"/>
<dbReference type="GeneID" id="945112"/>
<dbReference type="KEGG" id="ecj:JW0452"/>
<dbReference type="KEGG" id="eco:b0463"/>
<dbReference type="KEGG" id="ecoc:C3026_02270"/>
<dbReference type="PATRIC" id="fig|1411691.4.peg.1813"/>
<dbReference type="EchoBASE" id="EB1654"/>
<dbReference type="eggNOG" id="COG0845">
    <property type="taxonomic scope" value="Bacteria"/>
</dbReference>
<dbReference type="HOGENOM" id="CLU_018816_2_1_6"/>
<dbReference type="InParanoid" id="P0AE06"/>
<dbReference type="OMA" id="INVRYTK"/>
<dbReference type="OrthoDB" id="9800613at2"/>
<dbReference type="PhylomeDB" id="P0AE06"/>
<dbReference type="BioCyc" id="EcoCyc:EG11703-MONOMER"/>
<dbReference type="BioCyc" id="MetaCyc:EG11703-MONOMER"/>
<dbReference type="EvolutionaryTrace" id="P0AE06"/>
<dbReference type="PRO" id="PR:P0AE06"/>
<dbReference type="Proteomes" id="UP000000625">
    <property type="component" value="Chromosome"/>
</dbReference>
<dbReference type="GO" id="GO:1990281">
    <property type="term" value="C:efflux pump complex"/>
    <property type="evidence" value="ECO:0000314"/>
    <property type="project" value="EcoCyc"/>
</dbReference>
<dbReference type="GO" id="GO:0030288">
    <property type="term" value="C:outer membrane-bounded periplasmic space"/>
    <property type="evidence" value="ECO:0000314"/>
    <property type="project" value="EcoCyc"/>
</dbReference>
<dbReference type="GO" id="GO:0098567">
    <property type="term" value="C:periplasmic side of plasma membrane"/>
    <property type="evidence" value="ECO:0000303"/>
    <property type="project" value="ComplexPortal"/>
</dbReference>
<dbReference type="GO" id="GO:0005886">
    <property type="term" value="C:plasma membrane"/>
    <property type="evidence" value="ECO:0000318"/>
    <property type="project" value="GO_Central"/>
</dbReference>
<dbReference type="GO" id="GO:0015567">
    <property type="term" value="F:alkane transmembrane transporter activity"/>
    <property type="evidence" value="ECO:0000316"/>
    <property type="project" value="EcoCyc"/>
</dbReference>
<dbReference type="GO" id="GO:0015125">
    <property type="term" value="F:bile acid transmembrane transporter activity"/>
    <property type="evidence" value="ECO:0000316"/>
    <property type="project" value="EcoCyc"/>
</dbReference>
<dbReference type="GO" id="GO:0042802">
    <property type="term" value="F:identical protein binding"/>
    <property type="evidence" value="ECO:0000353"/>
    <property type="project" value="IntAct"/>
</dbReference>
<dbReference type="GO" id="GO:0015895">
    <property type="term" value="P:alkane transport"/>
    <property type="evidence" value="ECO:0000316"/>
    <property type="project" value="EcoCyc"/>
</dbReference>
<dbReference type="GO" id="GO:0015721">
    <property type="term" value="P:bile acid and bile salt transport"/>
    <property type="evidence" value="ECO:0000315"/>
    <property type="project" value="EcoCyc"/>
</dbReference>
<dbReference type="GO" id="GO:0015908">
    <property type="term" value="P:fatty acid transport"/>
    <property type="evidence" value="ECO:0000316"/>
    <property type="project" value="EcoCyc"/>
</dbReference>
<dbReference type="GO" id="GO:0046677">
    <property type="term" value="P:response to antibiotic"/>
    <property type="evidence" value="ECO:0000315"/>
    <property type="project" value="EcoCyc"/>
</dbReference>
<dbReference type="GO" id="GO:0009636">
    <property type="term" value="P:response to toxic substance"/>
    <property type="evidence" value="ECO:0000269"/>
    <property type="project" value="EcoCyc"/>
</dbReference>
<dbReference type="GO" id="GO:0009410">
    <property type="term" value="P:response to xenobiotic stimulus"/>
    <property type="evidence" value="ECO:0000316"/>
    <property type="project" value="EcoCyc"/>
</dbReference>
<dbReference type="GO" id="GO:0140330">
    <property type="term" value="P:xenobiotic detoxification by transmembrane export across the cell outer membrane"/>
    <property type="evidence" value="ECO:0000314"/>
    <property type="project" value="ComplexPortal"/>
</dbReference>
<dbReference type="GO" id="GO:0042908">
    <property type="term" value="P:xenobiotic transport"/>
    <property type="evidence" value="ECO:0000315"/>
    <property type="project" value="EcoCyc"/>
</dbReference>
<dbReference type="FunFam" id="1.10.287.470:FF:000002">
    <property type="entry name" value="Efflux RND transporter periplasmic adaptor subunit"/>
    <property type="match status" value="1"/>
</dbReference>
<dbReference type="FunFam" id="2.40.420.20:FF:000001">
    <property type="entry name" value="Efflux RND transporter periplasmic adaptor subunit"/>
    <property type="match status" value="1"/>
</dbReference>
<dbReference type="FunFam" id="2.40.30.170:FF:000001">
    <property type="entry name" value="Multidrug resistance efflux transporter MdtE"/>
    <property type="match status" value="1"/>
</dbReference>
<dbReference type="Gene3D" id="2.40.30.170">
    <property type="match status" value="1"/>
</dbReference>
<dbReference type="Gene3D" id="2.40.420.20">
    <property type="match status" value="1"/>
</dbReference>
<dbReference type="Gene3D" id="2.40.50.100">
    <property type="match status" value="1"/>
</dbReference>
<dbReference type="Gene3D" id="1.10.287.470">
    <property type="entry name" value="Helix hairpin bin"/>
    <property type="match status" value="1"/>
</dbReference>
<dbReference type="InterPro" id="IPR043602">
    <property type="entry name" value="CusB-like_dom_1"/>
</dbReference>
<dbReference type="InterPro" id="IPR032317">
    <property type="entry name" value="CusB_D23"/>
</dbReference>
<dbReference type="InterPro" id="IPR051160">
    <property type="entry name" value="MFP_Efflux"/>
</dbReference>
<dbReference type="InterPro" id="IPR006143">
    <property type="entry name" value="RND_pump_MFP"/>
</dbReference>
<dbReference type="NCBIfam" id="NF011604">
    <property type="entry name" value="PRK15030.1"/>
    <property type="match status" value="1"/>
</dbReference>
<dbReference type="NCBIfam" id="TIGR01730">
    <property type="entry name" value="RND_mfp"/>
    <property type="match status" value="1"/>
</dbReference>
<dbReference type="PANTHER" id="PTHR30158">
    <property type="entry name" value="ACRA/E-RELATED COMPONENT OF DRUG EFFLUX TRANSPORTER"/>
    <property type="match status" value="1"/>
</dbReference>
<dbReference type="PANTHER" id="PTHR30158:SF3">
    <property type="entry name" value="MULTIDRUG EFFLUX PUMP SUBUNIT ACRA-RELATED"/>
    <property type="match status" value="1"/>
</dbReference>
<dbReference type="Pfam" id="PF00529">
    <property type="entry name" value="CusB_dom_1"/>
    <property type="match status" value="1"/>
</dbReference>
<dbReference type="Pfam" id="PF16576">
    <property type="entry name" value="HlyD_D23"/>
    <property type="match status" value="1"/>
</dbReference>
<dbReference type="SUPFAM" id="SSF111369">
    <property type="entry name" value="HlyD-like secretion proteins"/>
    <property type="match status" value="1"/>
</dbReference>
<dbReference type="PROSITE" id="PS51257">
    <property type="entry name" value="PROKAR_LIPOPROTEIN"/>
    <property type="match status" value="1"/>
</dbReference>
<evidence type="ECO:0000255" key="1">
    <source>
        <dbReference type="PROSITE-ProRule" id="PRU00303"/>
    </source>
</evidence>
<evidence type="ECO:0000256" key="2">
    <source>
        <dbReference type="SAM" id="MobiDB-lite"/>
    </source>
</evidence>
<evidence type="ECO:0000269" key="3">
    <source>
    </source>
</evidence>
<evidence type="ECO:0000269" key="4">
    <source>
    </source>
</evidence>
<evidence type="ECO:0000269" key="5">
    <source>
    </source>
</evidence>
<evidence type="ECO:0000269" key="6">
    <source>
    </source>
</evidence>
<evidence type="ECO:0000269" key="7">
    <source>
    </source>
</evidence>
<evidence type="ECO:0000269" key="8">
    <source>
    </source>
</evidence>
<evidence type="ECO:0000305" key="9"/>
<evidence type="ECO:0000305" key="10">
    <source>
    </source>
</evidence>
<evidence type="ECO:0007829" key="11">
    <source>
        <dbReference type="PDB" id="2F1M"/>
    </source>
</evidence>
<comment type="function">
    <text evidence="8">AcrA-AcrB-AcrZ-TolC is a drug efflux protein complex with broad substrate specificity that uses the proton motive force to export substrates. This subunit may act as an adapter protein that links AcrB and TolC stably together. It is elongated in shape, being long enough to span the periplasm.</text>
</comment>
<comment type="subunit">
    <text evidence="3 4 7 8">Monomeric in solution. Homotrimeric; interacts independently with AcrB and TolC as well as AcrZ. Part of the AcrA-AcrB-TolC efflux pump. Complex assembly is independent of an efflux substrate and appears to be constitutive.</text>
</comment>
<comment type="interaction">
    <interactant intactId="EBI-875601">
        <id>P0AE06</id>
    </interactant>
    <interactant intactId="EBI-875601">
        <id>P0AE06</id>
        <label>acrA</label>
    </interactant>
    <organismsDiffer>false</organismsDiffer>
    <experiments>6</experiments>
</comment>
<comment type="interaction">
    <interactant intactId="EBI-875601">
        <id>P0AE06</id>
    </interactant>
    <interactant intactId="EBI-875614">
        <id>P02930</id>
        <label>tolC</label>
    </interactant>
    <organismsDiffer>false</organismsDiffer>
    <experiments>2</experiments>
</comment>
<comment type="subcellular location">
    <subcellularLocation>
        <location evidence="4 5">Cell inner membrane</location>
        <topology evidence="1 4 5">Lipid-anchor</topology>
    </subcellularLocation>
    <text>An unlipidated version of this protein (directed to the periplasm by the OmpA signal sequence) functions normally.</text>
</comment>
<comment type="disruption phenotype">
    <text evidence="8">Cannot grow on efflux substrates novobiocin or fusidic acid.</text>
</comment>
<comment type="similarity">
    <text evidence="9">Belongs to the membrane fusion protein (MFP) (TC 8.A.1) family.</text>
</comment>
<proteinExistence type="evidence at protein level"/>
<protein>
    <recommendedName>
        <fullName>Multidrug efflux pump subunit AcrA</fullName>
    </recommendedName>
    <alternativeName>
        <fullName>AcrAB-TolC multidrug efflux pump subunit AcrA</fullName>
    </alternativeName>
    <alternativeName>
        <fullName>Acridine resistance protein A</fullName>
    </alternativeName>
</protein>
<gene>
    <name type="primary">acrA</name>
    <name type="synonym">lir</name>
    <name type="synonym">mtcA</name>
    <name type="ordered locus">b0463</name>
    <name type="ordered locus">JW0452</name>
</gene>
<accession>P0AE06</accession>
<accession>P31223</accession>
<accession>Q2MBW4</accession>
<reference key="1">
    <citation type="journal article" date="1993" name="J. Bacteriol.">
        <title>Molecular cloning and characterization of acrA and acrE genes of Escherichia coli.</title>
        <authorList>
            <person name="Ma D."/>
            <person name="Cook D.N."/>
            <person name="Alberti M."/>
            <person name="Pon N.G."/>
            <person name="Nikaido H."/>
            <person name="Hearst J.E."/>
        </authorList>
    </citation>
    <scope>NUCLEOTIDE SEQUENCE [GENOMIC DNA]</scope>
    <source>
        <strain>K12 / W4573</strain>
    </source>
</reference>
<reference key="2">
    <citation type="submission" date="1993-05" db="EMBL/GenBank/DDBJ databases">
        <title>Nucleotide sequence of the acrAB operon from Escherichia coli.</title>
        <authorList>
            <person name="Xu J."/>
            <person name="Bertrand K.P."/>
        </authorList>
    </citation>
    <scope>NUCLEOTIDE SEQUENCE [GENOMIC DNA]</scope>
    <source>
        <strain>K12</strain>
    </source>
</reference>
<reference key="3">
    <citation type="submission" date="1997-01" db="EMBL/GenBank/DDBJ databases">
        <title>Sequence of minutes 4-25 of Escherichia coli.</title>
        <authorList>
            <person name="Chung E."/>
            <person name="Allen E."/>
            <person name="Araujo R."/>
            <person name="Aparicio A.M."/>
            <person name="Davis K."/>
            <person name="Duncan M."/>
            <person name="Federspiel N."/>
            <person name="Hyman R."/>
            <person name="Kalman S."/>
            <person name="Komp C."/>
            <person name="Kurdi O."/>
            <person name="Lew H."/>
            <person name="Lin D."/>
            <person name="Namath A."/>
            <person name="Oefner P."/>
            <person name="Roberts D."/>
            <person name="Schramm S."/>
            <person name="Davis R.W."/>
        </authorList>
    </citation>
    <scope>NUCLEOTIDE SEQUENCE [LARGE SCALE GENOMIC DNA]</scope>
    <source>
        <strain>K12 / MG1655 / ATCC 47076</strain>
    </source>
</reference>
<reference key="4">
    <citation type="journal article" date="1997" name="Science">
        <title>The complete genome sequence of Escherichia coli K-12.</title>
        <authorList>
            <person name="Blattner F.R."/>
            <person name="Plunkett G. III"/>
            <person name="Bloch C.A."/>
            <person name="Perna N.T."/>
            <person name="Burland V."/>
            <person name="Riley M."/>
            <person name="Collado-Vides J."/>
            <person name="Glasner J.D."/>
            <person name="Rode C.K."/>
            <person name="Mayhew G.F."/>
            <person name="Gregor J."/>
            <person name="Davis N.W."/>
            <person name="Kirkpatrick H.A."/>
            <person name="Goeden M.A."/>
            <person name="Rose D.J."/>
            <person name="Mau B."/>
            <person name="Shao Y."/>
        </authorList>
    </citation>
    <scope>NUCLEOTIDE SEQUENCE [LARGE SCALE GENOMIC DNA]</scope>
    <source>
        <strain>K12 / MG1655 / ATCC 47076</strain>
    </source>
</reference>
<reference key="5">
    <citation type="journal article" date="2006" name="Mol. Syst. Biol.">
        <title>Highly accurate genome sequences of Escherichia coli K-12 strains MG1655 and W3110.</title>
        <authorList>
            <person name="Hayashi K."/>
            <person name="Morooka N."/>
            <person name="Yamamoto Y."/>
            <person name="Fujita K."/>
            <person name="Isono K."/>
            <person name="Choi S."/>
            <person name="Ohtsubo E."/>
            <person name="Baba T."/>
            <person name="Wanner B.L."/>
            <person name="Mori H."/>
            <person name="Horiuchi T."/>
        </authorList>
    </citation>
    <scope>NUCLEOTIDE SEQUENCE [LARGE SCALE GENOMIC DNA]</scope>
    <source>
        <strain>K12 / W3110 / ATCC 27325 / DSM 5911</strain>
    </source>
</reference>
<reference key="6">
    <citation type="journal article" date="1995" name="Mol. Microbiol.">
        <title>Genes acrA and acrB encode a stress-induced efflux system of Escherichia coli.</title>
        <authorList>
            <person name="Ma D."/>
            <person name="Cook D.N."/>
            <person name="Alberti M."/>
            <person name="Pon N.G."/>
            <person name="Nikaido H."/>
            <person name="Hearst J.E."/>
        </authorList>
    </citation>
    <scope>CHARACTERIZATION</scope>
</reference>
<reference key="7">
    <citation type="journal article" date="1999" name="J. Mol. Biol.">
        <title>AcrA is a highly asymmetric protein capable of spanning the periplasm.</title>
        <authorList>
            <person name="Zgurskaya H.I."/>
            <person name="Nikaido H."/>
        </authorList>
    </citation>
    <scope>FUNCTION IN EFFLUX</scope>
    <scope>SUBUNIT</scope>
    <scope>PALMITOYLATION AT CYS-25</scope>
    <scope>DISRUPTION PHENOTYPE</scope>
</reference>
<reference key="8">
    <citation type="journal article" date="2000" name="J. Biochem.">
        <title>Molecular construction of a multidrug exporter system, AcrAB: molecular interaction between AcrA and AcrB, and cleavage of the N-terminal signal sequence of AcrA.</title>
        <authorList>
            <person name="Kawabe T."/>
            <person name="Fujihira E."/>
            <person name="Yamaguchi A."/>
        </authorList>
    </citation>
    <scope>PROTEOLYTIC PROCESSING</scope>
    <scope>INTERACTION WITH ACRB</scope>
</reference>
<reference key="9">
    <citation type="journal article" date="2004" name="Mol. Microbiol.">
        <title>Interactions underlying assembly of the Escherichia coli AcrAB-TolC multidrug efflux system.</title>
        <authorList>
            <person name="Touze T."/>
            <person name="Eswaran J."/>
            <person name="Bokma E."/>
            <person name="Koronakis E."/>
            <person name="Hughes C."/>
            <person name="Koronakis V."/>
        </authorList>
    </citation>
    <scope>INTERACTION WITH ACRB AND TOLC</scope>
    <scope>SUBUNIT</scope>
    <scope>SUBCELLULAR LOCATION</scope>
    <source>
        <strain>K12 / MC1061 / ATCC 53338 / DSM 7140</strain>
    </source>
</reference>
<reference key="10">
    <citation type="journal article" date="2005" name="J. Biol. Chem.">
        <title>Protein complexes of the Escherichia coli cell envelope.</title>
        <authorList>
            <person name="Stenberg F."/>
            <person name="Chovanec P."/>
            <person name="Maslen S.L."/>
            <person name="Robinson C.V."/>
            <person name="Ilag L."/>
            <person name="von Heijne G."/>
            <person name="Daley D.O."/>
        </authorList>
    </citation>
    <scope>HOMOTRIMERIZATION</scope>
    <scope>SUBCELLULAR LOCATION</scope>
    <source>
        <strain>BL21-DE3</strain>
    </source>
</reference>
<reference key="11">
    <citation type="journal article" date="2012" name="Proc. Natl. Acad. Sci. U.S.A.">
        <title>Conserved small protein associates with the multidrug efflux pump AcrB and differentially affects antibiotic resistance.</title>
        <authorList>
            <person name="Hobbs E.C."/>
            <person name="Yin X."/>
            <person name="Paul B.J."/>
            <person name="Astarita J.L."/>
            <person name="Storz G."/>
        </authorList>
    </citation>
    <scope>SUBUNIT</scope>
    <source>
        <strain>K12 / MG1655 / ATCC 47076</strain>
    </source>
</reference>
<reference key="12">
    <citation type="journal article" date="2006" name="Structure">
        <title>Conformational flexibility in the multidrug efflux system protein AcrA.</title>
        <authorList>
            <person name="Mikolosko J."/>
            <person name="Bobyk K."/>
            <person name="Zgurskaya H.I."/>
            <person name="Ghosh P."/>
        </authorList>
    </citation>
    <scope>X-RAY CRYSTALLOGRAPHY (2.71 ANGSTROMS) OF 45-312</scope>
    <scope>MUTAGENESIS OF 223-MET-MET-224 AND 287-LEU-LEU-288</scope>
    <source>
        <strain>K12 / JM101 / ATCC 33876 / DSM 3948 / NCIMB 11926</strain>
    </source>
</reference>
<keyword id="KW-0002">3D-structure</keyword>
<keyword id="KW-0046">Antibiotic resistance</keyword>
<keyword id="KW-0997">Cell inner membrane</keyword>
<keyword id="KW-1003">Cell membrane</keyword>
<keyword id="KW-0175">Coiled coil</keyword>
<keyword id="KW-0449">Lipoprotein</keyword>
<keyword id="KW-0472">Membrane</keyword>
<keyword id="KW-0564">Palmitate</keyword>
<keyword id="KW-1185">Reference proteome</keyword>
<keyword id="KW-0732">Signal</keyword>
<keyword id="KW-0813">Transport</keyword>